<proteinExistence type="inferred from homology"/>
<dbReference type="EMBL" id="CP001055">
    <property type="protein sequence ID" value="ACC98964.1"/>
    <property type="molecule type" value="Genomic_DNA"/>
</dbReference>
<dbReference type="RefSeq" id="WP_012415579.1">
    <property type="nucleotide sequence ID" value="NC_010644.1"/>
</dbReference>
<dbReference type="SMR" id="B2KEL8"/>
<dbReference type="STRING" id="445932.Emin_1415"/>
<dbReference type="KEGG" id="emi:Emin_1415"/>
<dbReference type="HOGENOM" id="CLU_036235_2_1_0"/>
<dbReference type="OrthoDB" id="9778722at2"/>
<dbReference type="Proteomes" id="UP000001029">
    <property type="component" value="Chromosome"/>
</dbReference>
<dbReference type="GO" id="GO:0015934">
    <property type="term" value="C:large ribosomal subunit"/>
    <property type="evidence" value="ECO:0007669"/>
    <property type="project" value="InterPro"/>
</dbReference>
<dbReference type="GO" id="GO:0019843">
    <property type="term" value="F:rRNA binding"/>
    <property type="evidence" value="ECO:0007669"/>
    <property type="project" value="UniProtKB-UniRule"/>
</dbReference>
<dbReference type="GO" id="GO:0003735">
    <property type="term" value="F:structural constituent of ribosome"/>
    <property type="evidence" value="ECO:0007669"/>
    <property type="project" value="InterPro"/>
</dbReference>
<dbReference type="GO" id="GO:0016740">
    <property type="term" value="F:transferase activity"/>
    <property type="evidence" value="ECO:0007669"/>
    <property type="project" value="InterPro"/>
</dbReference>
<dbReference type="GO" id="GO:0002181">
    <property type="term" value="P:cytoplasmic translation"/>
    <property type="evidence" value="ECO:0007669"/>
    <property type="project" value="TreeGrafter"/>
</dbReference>
<dbReference type="FunFam" id="2.30.30.30:FF:000001">
    <property type="entry name" value="50S ribosomal protein L2"/>
    <property type="match status" value="1"/>
</dbReference>
<dbReference type="FunFam" id="2.40.50.140:FF:000003">
    <property type="entry name" value="50S ribosomal protein L2"/>
    <property type="match status" value="1"/>
</dbReference>
<dbReference type="FunFam" id="4.10.950.10:FF:000001">
    <property type="entry name" value="50S ribosomal protein L2"/>
    <property type="match status" value="1"/>
</dbReference>
<dbReference type="Gene3D" id="2.30.30.30">
    <property type="match status" value="1"/>
</dbReference>
<dbReference type="Gene3D" id="2.40.50.140">
    <property type="entry name" value="Nucleic acid-binding proteins"/>
    <property type="match status" value="1"/>
</dbReference>
<dbReference type="Gene3D" id="4.10.950.10">
    <property type="entry name" value="Ribosomal protein L2, domain 3"/>
    <property type="match status" value="1"/>
</dbReference>
<dbReference type="HAMAP" id="MF_01320_B">
    <property type="entry name" value="Ribosomal_uL2_B"/>
    <property type="match status" value="1"/>
</dbReference>
<dbReference type="InterPro" id="IPR012340">
    <property type="entry name" value="NA-bd_OB-fold"/>
</dbReference>
<dbReference type="InterPro" id="IPR014722">
    <property type="entry name" value="Rib_uL2_dom2"/>
</dbReference>
<dbReference type="InterPro" id="IPR002171">
    <property type="entry name" value="Ribosomal_uL2"/>
</dbReference>
<dbReference type="InterPro" id="IPR005880">
    <property type="entry name" value="Ribosomal_uL2_bac/org-type"/>
</dbReference>
<dbReference type="InterPro" id="IPR022669">
    <property type="entry name" value="Ribosomal_uL2_C"/>
</dbReference>
<dbReference type="InterPro" id="IPR022671">
    <property type="entry name" value="Ribosomal_uL2_CS"/>
</dbReference>
<dbReference type="InterPro" id="IPR014726">
    <property type="entry name" value="Ribosomal_uL2_dom3"/>
</dbReference>
<dbReference type="InterPro" id="IPR022666">
    <property type="entry name" value="Ribosomal_uL2_RNA-bd_dom"/>
</dbReference>
<dbReference type="InterPro" id="IPR008991">
    <property type="entry name" value="Translation_prot_SH3-like_sf"/>
</dbReference>
<dbReference type="NCBIfam" id="TIGR01171">
    <property type="entry name" value="rplB_bact"/>
    <property type="match status" value="1"/>
</dbReference>
<dbReference type="PANTHER" id="PTHR13691:SF5">
    <property type="entry name" value="LARGE RIBOSOMAL SUBUNIT PROTEIN UL2M"/>
    <property type="match status" value="1"/>
</dbReference>
<dbReference type="PANTHER" id="PTHR13691">
    <property type="entry name" value="RIBOSOMAL PROTEIN L2"/>
    <property type="match status" value="1"/>
</dbReference>
<dbReference type="Pfam" id="PF00181">
    <property type="entry name" value="Ribosomal_L2"/>
    <property type="match status" value="1"/>
</dbReference>
<dbReference type="Pfam" id="PF03947">
    <property type="entry name" value="Ribosomal_L2_C"/>
    <property type="match status" value="1"/>
</dbReference>
<dbReference type="PIRSF" id="PIRSF002158">
    <property type="entry name" value="Ribosomal_L2"/>
    <property type="match status" value="1"/>
</dbReference>
<dbReference type="SMART" id="SM01383">
    <property type="entry name" value="Ribosomal_L2"/>
    <property type="match status" value="1"/>
</dbReference>
<dbReference type="SMART" id="SM01382">
    <property type="entry name" value="Ribosomal_L2_C"/>
    <property type="match status" value="1"/>
</dbReference>
<dbReference type="SUPFAM" id="SSF50249">
    <property type="entry name" value="Nucleic acid-binding proteins"/>
    <property type="match status" value="1"/>
</dbReference>
<dbReference type="SUPFAM" id="SSF50104">
    <property type="entry name" value="Translation proteins SH3-like domain"/>
    <property type="match status" value="1"/>
</dbReference>
<dbReference type="PROSITE" id="PS00467">
    <property type="entry name" value="RIBOSOMAL_L2"/>
    <property type="match status" value="1"/>
</dbReference>
<accession>B2KEL8</accession>
<gene>
    <name evidence="1" type="primary">rplB</name>
    <name type="ordered locus">Emin_1415</name>
</gene>
<evidence type="ECO:0000255" key="1">
    <source>
        <dbReference type="HAMAP-Rule" id="MF_01320"/>
    </source>
</evidence>
<evidence type="ECO:0000256" key="2">
    <source>
        <dbReference type="SAM" id="MobiDB-lite"/>
    </source>
</evidence>
<evidence type="ECO:0000305" key="3"/>
<name>RL2_ELUMP</name>
<organism>
    <name type="scientific">Elusimicrobium minutum (strain Pei191)</name>
    <dbReference type="NCBI Taxonomy" id="445932"/>
    <lineage>
        <taxon>Bacteria</taxon>
        <taxon>Pseudomonadati</taxon>
        <taxon>Elusimicrobiota</taxon>
        <taxon>Elusimicrobia</taxon>
        <taxon>Elusimicrobiales</taxon>
        <taxon>Elusimicrobiaceae</taxon>
        <taxon>Elusimicrobium</taxon>
    </lineage>
</organism>
<reference key="1">
    <citation type="journal article" date="2009" name="Appl. Environ. Microbiol.">
        <title>Genomic analysis of 'Elusimicrobium minutum,' the first cultivated representative of the phylum 'Elusimicrobia' (formerly termite group 1).</title>
        <authorList>
            <person name="Herlemann D.P.R."/>
            <person name="Geissinger O."/>
            <person name="Ikeda-Ohtsubo W."/>
            <person name="Kunin V."/>
            <person name="Sun H."/>
            <person name="Lapidus A."/>
            <person name="Hugenholtz P."/>
            <person name="Brune A."/>
        </authorList>
    </citation>
    <scope>NUCLEOTIDE SEQUENCE [LARGE SCALE GENOMIC DNA]</scope>
    <source>
        <strain>Pei191</strain>
    </source>
</reference>
<feature type="chain" id="PRO_1000141551" description="Large ribosomal subunit protein uL2">
    <location>
        <begin position="1"/>
        <end position="279"/>
    </location>
</feature>
<feature type="region of interest" description="Disordered" evidence="2">
    <location>
        <begin position="224"/>
        <end position="279"/>
    </location>
</feature>
<protein>
    <recommendedName>
        <fullName evidence="1">Large ribosomal subunit protein uL2</fullName>
    </recommendedName>
    <alternativeName>
        <fullName evidence="3">50S ribosomal protein L2</fullName>
    </alternativeName>
</protein>
<keyword id="KW-1185">Reference proteome</keyword>
<keyword id="KW-0687">Ribonucleoprotein</keyword>
<keyword id="KW-0689">Ribosomal protein</keyword>
<keyword id="KW-0694">RNA-binding</keyword>
<keyword id="KW-0699">rRNA-binding</keyword>
<comment type="function">
    <text evidence="1">One of the primary rRNA binding proteins. Required for association of the 30S and 50S subunits to form the 70S ribosome, for tRNA binding and peptide bond formation. It has been suggested to have peptidyltransferase activity; this is somewhat controversial. Makes several contacts with the 16S rRNA in the 70S ribosome.</text>
</comment>
<comment type="subunit">
    <text evidence="1">Part of the 50S ribosomal subunit. Forms a bridge to the 30S subunit in the 70S ribosome.</text>
</comment>
<comment type="similarity">
    <text evidence="1">Belongs to the universal ribosomal protein uL2 family.</text>
</comment>
<sequence>MPIKTFRPYTPSRRTITVADFSEITTKTPEKRLVKGLRKTGGRNNTGMIMVRHIGGGHKRAYRQIDFKREKYGVPAKVATIEYDPNRNARICLLHYADGDKRYIIHPVGLKIGDEVMSGPNAEIKVGNCLPLKNIPEGTFIHALELKVGKGAQLVRSAGSQAQLMAKENDYAHVKMPSGEIRLVPIACCASIGQVGNVEHNNIVIGNAGRKRHRGVKPTVRGSAMNAVDHPMGGGRGHSKGGNIPRSPWNQPSRGLKTRPKKSWDWMIVSDRRKNKAGK</sequence>